<comment type="function">
    <text evidence="1">Major role in the synthesis of nucleoside triphosphates other than ATP. The ATP gamma phosphate is transferred to the NDP beta phosphate via a ping-pong mechanism, using a phosphorylated active-site intermediate.</text>
</comment>
<comment type="catalytic activity">
    <reaction evidence="1">
        <text>a 2'-deoxyribonucleoside 5'-diphosphate + ATP = a 2'-deoxyribonucleoside 5'-triphosphate + ADP</text>
        <dbReference type="Rhea" id="RHEA:44640"/>
        <dbReference type="ChEBI" id="CHEBI:30616"/>
        <dbReference type="ChEBI" id="CHEBI:61560"/>
        <dbReference type="ChEBI" id="CHEBI:73316"/>
        <dbReference type="ChEBI" id="CHEBI:456216"/>
        <dbReference type="EC" id="2.7.4.6"/>
    </reaction>
</comment>
<comment type="catalytic activity">
    <reaction evidence="1">
        <text>a ribonucleoside 5'-diphosphate + ATP = a ribonucleoside 5'-triphosphate + ADP</text>
        <dbReference type="Rhea" id="RHEA:18113"/>
        <dbReference type="ChEBI" id="CHEBI:30616"/>
        <dbReference type="ChEBI" id="CHEBI:57930"/>
        <dbReference type="ChEBI" id="CHEBI:61557"/>
        <dbReference type="ChEBI" id="CHEBI:456216"/>
        <dbReference type="EC" id="2.7.4.6"/>
    </reaction>
</comment>
<comment type="cofactor">
    <cofactor evidence="1">
        <name>Mg(2+)</name>
        <dbReference type="ChEBI" id="CHEBI:18420"/>
    </cofactor>
</comment>
<comment type="subunit">
    <text evidence="1">Homotetramer.</text>
</comment>
<comment type="subcellular location">
    <subcellularLocation>
        <location evidence="1">Cytoplasm</location>
    </subcellularLocation>
</comment>
<comment type="similarity">
    <text evidence="1">Belongs to the NDK family.</text>
</comment>
<reference key="1">
    <citation type="journal article" date="2005" name="PLoS Genet.">
        <title>Life in hot carbon monoxide: the complete genome sequence of Carboxydothermus hydrogenoformans Z-2901.</title>
        <authorList>
            <person name="Wu M."/>
            <person name="Ren Q."/>
            <person name="Durkin A.S."/>
            <person name="Daugherty S.C."/>
            <person name="Brinkac L.M."/>
            <person name="Dodson R.J."/>
            <person name="Madupu R."/>
            <person name="Sullivan S.A."/>
            <person name="Kolonay J.F."/>
            <person name="Nelson W.C."/>
            <person name="Tallon L.J."/>
            <person name="Jones K.M."/>
            <person name="Ulrich L.E."/>
            <person name="Gonzalez J.M."/>
            <person name="Zhulin I.B."/>
            <person name="Robb F.T."/>
            <person name="Eisen J.A."/>
        </authorList>
    </citation>
    <scope>NUCLEOTIDE SEQUENCE [LARGE SCALE GENOMIC DNA]</scope>
    <source>
        <strain>ATCC BAA-161 / DSM 6008 / Z-2901</strain>
    </source>
</reference>
<proteinExistence type="inferred from homology"/>
<gene>
    <name evidence="1" type="primary">ndk</name>
    <name type="ordered locus">CHY_0215</name>
</gene>
<dbReference type="EC" id="2.7.4.6" evidence="1"/>
<dbReference type="EMBL" id="CP000141">
    <property type="protein sequence ID" value="ABB15304.1"/>
    <property type="molecule type" value="Genomic_DNA"/>
</dbReference>
<dbReference type="RefSeq" id="WP_011343163.1">
    <property type="nucleotide sequence ID" value="NC_007503.1"/>
</dbReference>
<dbReference type="SMR" id="Q3AFJ7"/>
<dbReference type="FunCoup" id="Q3AFJ7">
    <property type="interactions" value="404"/>
</dbReference>
<dbReference type="STRING" id="246194.CHY_0215"/>
<dbReference type="KEGG" id="chy:CHY_0215"/>
<dbReference type="eggNOG" id="COG0105">
    <property type="taxonomic scope" value="Bacteria"/>
</dbReference>
<dbReference type="HOGENOM" id="CLU_060216_6_3_9"/>
<dbReference type="InParanoid" id="Q3AFJ7"/>
<dbReference type="OrthoDB" id="9801161at2"/>
<dbReference type="Proteomes" id="UP000002706">
    <property type="component" value="Chromosome"/>
</dbReference>
<dbReference type="GO" id="GO:0005737">
    <property type="term" value="C:cytoplasm"/>
    <property type="evidence" value="ECO:0007669"/>
    <property type="project" value="UniProtKB-SubCell"/>
</dbReference>
<dbReference type="GO" id="GO:0005524">
    <property type="term" value="F:ATP binding"/>
    <property type="evidence" value="ECO:0007669"/>
    <property type="project" value="UniProtKB-UniRule"/>
</dbReference>
<dbReference type="GO" id="GO:0046872">
    <property type="term" value="F:metal ion binding"/>
    <property type="evidence" value="ECO:0007669"/>
    <property type="project" value="UniProtKB-KW"/>
</dbReference>
<dbReference type="GO" id="GO:0004550">
    <property type="term" value="F:nucleoside diphosphate kinase activity"/>
    <property type="evidence" value="ECO:0007669"/>
    <property type="project" value="UniProtKB-UniRule"/>
</dbReference>
<dbReference type="GO" id="GO:0006241">
    <property type="term" value="P:CTP biosynthetic process"/>
    <property type="evidence" value="ECO:0007669"/>
    <property type="project" value="UniProtKB-UniRule"/>
</dbReference>
<dbReference type="GO" id="GO:0006183">
    <property type="term" value="P:GTP biosynthetic process"/>
    <property type="evidence" value="ECO:0007669"/>
    <property type="project" value="UniProtKB-UniRule"/>
</dbReference>
<dbReference type="GO" id="GO:0006228">
    <property type="term" value="P:UTP biosynthetic process"/>
    <property type="evidence" value="ECO:0007669"/>
    <property type="project" value="UniProtKB-UniRule"/>
</dbReference>
<dbReference type="CDD" id="cd04413">
    <property type="entry name" value="NDPk_I"/>
    <property type="match status" value="1"/>
</dbReference>
<dbReference type="FunFam" id="3.30.70.141:FF:000002">
    <property type="entry name" value="Nucleoside diphosphate kinase"/>
    <property type="match status" value="1"/>
</dbReference>
<dbReference type="Gene3D" id="3.30.70.141">
    <property type="entry name" value="Nucleoside diphosphate kinase-like domain"/>
    <property type="match status" value="1"/>
</dbReference>
<dbReference type="HAMAP" id="MF_00451">
    <property type="entry name" value="NDP_kinase"/>
    <property type="match status" value="1"/>
</dbReference>
<dbReference type="InterPro" id="IPR034907">
    <property type="entry name" value="NDK-like_dom"/>
</dbReference>
<dbReference type="InterPro" id="IPR036850">
    <property type="entry name" value="NDK-like_dom_sf"/>
</dbReference>
<dbReference type="InterPro" id="IPR001564">
    <property type="entry name" value="Nucleoside_diP_kinase"/>
</dbReference>
<dbReference type="InterPro" id="IPR023005">
    <property type="entry name" value="Nucleoside_diP_kinase_AS"/>
</dbReference>
<dbReference type="NCBIfam" id="NF001908">
    <property type="entry name" value="PRK00668.1"/>
    <property type="match status" value="1"/>
</dbReference>
<dbReference type="PANTHER" id="PTHR11349">
    <property type="entry name" value="NUCLEOSIDE DIPHOSPHATE KINASE"/>
    <property type="match status" value="1"/>
</dbReference>
<dbReference type="Pfam" id="PF00334">
    <property type="entry name" value="NDK"/>
    <property type="match status" value="1"/>
</dbReference>
<dbReference type="PRINTS" id="PR01243">
    <property type="entry name" value="NUCDPKINASE"/>
</dbReference>
<dbReference type="SMART" id="SM00562">
    <property type="entry name" value="NDK"/>
    <property type="match status" value="1"/>
</dbReference>
<dbReference type="SUPFAM" id="SSF54919">
    <property type="entry name" value="Nucleoside diphosphate kinase, NDK"/>
    <property type="match status" value="1"/>
</dbReference>
<dbReference type="PROSITE" id="PS00469">
    <property type="entry name" value="NDPK"/>
    <property type="match status" value="1"/>
</dbReference>
<dbReference type="PROSITE" id="PS51374">
    <property type="entry name" value="NDPK_LIKE"/>
    <property type="match status" value="1"/>
</dbReference>
<protein>
    <recommendedName>
        <fullName evidence="1">Nucleoside diphosphate kinase</fullName>
        <shortName evidence="1">NDK</shortName>
        <shortName evidence="1">NDP kinase</shortName>
        <ecNumber evidence="1">2.7.4.6</ecNumber>
    </recommendedName>
    <alternativeName>
        <fullName evidence="1">Nucleoside-2-P kinase</fullName>
    </alternativeName>
</protein>
<feature type="chain" id="PRO_0000226552" description="Nucleoside diphosphate kinase">
    <location>
        <begin position="1"/>
        <end position="149"/>
    </location>
</feature>
<feature type="active site" description="Pros-phosphohistidine intermediate" evidence="1">
    <location>
        <position position="115"/>
    </location>
</feature>
<feature type="binding site" evidence="1">
    <location>
        <position position="9"/>
    </location>
    <ligand>
        <name>ATP</name>
        <dbReference type="ChEBI" id="CHEBI:30616"/>
    </ligand>
</feature>
<feature type="binding site" evidence="1">
    <location>
        <position position="57"/>
    </location>
    <ligand>
        <name>ATP</name>
        <dbReference type="ChEBI" id="CHEBI:30616"/>
    </ligand>
</feature>
<feature type="binding site" evidence="1">
    <location>
        <position position="85"/>
    </location>
    <ligand>
        <name>ATP</name>
        <dbReference type="ChEBI" id="CHEBI:30616"/>
    </ligand>
</feature>
<feature type="binding site" evidence="1">
    <location>
        <position position="91"/>
    </location>
    <ligand>
        <name>ATP</name>
        <dbReference type="ChEBI" id="CHEBI:30616"/>
    </ligand>
</feature>
<feature type="binding site" evidence="1">
    <location>
        <position position="102"/>
    </location>
    <ligand>
        <name>ATP</name>
        <dbReference type="ChEBI" id="CHEBI:30616"/>
    </ligand>
</feature>
<feature type="binding site" evidence="1">
    <location>
        <position position="112"/>
    </location>
    <ligand>
        <name>ATP</name>
        <dbReference type="ChEBI" id="CHEBI:30616"/>
    </ligand>
</feature>
<accession>Q3AFJ7</accession>
<sequence length="149" mass="16737">MERTFIMVKPDGVQRGLVGEIISRFEKRGFKLVGLKLMQISRELAETHYGEHKGKPFFEGLLNFITSGPVVAMVWEGKEVIATAREMMGATNPLKAQPGTIRGTYGIDVGRNVIHGSDSPESAAREIALFFKEEELLSYEKTLDTWIYE</sequence>
<keyword id="KW-0067">ATP-binding</keyword>
<keyword id="KW-0963">Cytoplasm</keyword>
<keyword id="KW-0418">Kinase</keyword>
<keyword id="KW-0460">Magnesium</keyword>
<keyword id="KW-0479">Metal-binding</keyword>
<keyword id="KW-0546">Nucleotide metabolism</keyword>
<keyword id="KW-0547">Nucleotide-binding</keyword>
<keyword id="KW-0597">Phosphoprotein</keyword>
<keyword id="KW-1185">Reference proteome</keyword>
<keyword id="KW-0808">Transferase</keyword>
<evidence type="ECO:0000255" key="1">
    <source>
        <dbReference type="HAMAP-Rule" id="MF_00451"/>
    </source>
</evidence>
<organism>
    <name type="scientific">Carboxydothermus hydrogenoformans (strain ATCC BAA-161 / DSM 6008 / Z-2901)</name>
    <dbReference type="NCBI Taxonomy" id="246194"/>
    <lineage>
        <taxon>Bacteria</taxon>
        <taxon>Bacillati</taxon>
        <taxon>Bacillota</taxon>
        <taxon>Clostridia</taxon>
        <taxon>Thermoanaerobacterales</taxon>
        <taxon>Thermoanaerobacteraceae</taxon>
        <taxon>Carboxydothermus</taxon>
    </lineage>
</organism>
<name>NDK_CARHZ</name>